<name>UREG_NITOC</name>
<evidence type="ECO:0000255" key="1">
    <source>
        <dbReference type="HAMAP-Rule" id="MF_01389"/>
    </source>
</evidence>
<accession>Q3J773</accession>
<sequence>MSKQPLRVGIGGPVGSGKTTLTLSLCNALRNRYNVAVVTNDIYTEEDAQFLVRHQALAQERIIGVETGGCPHTAIREDASINLEAVAQLSQRFSDLDLILVESGGDNLAATFSPELSDLTLYVIDVAAGEKIPRKGGPGICKSDLLIINKTDLAPLVGASLEVMDRDARKMRGERPFLFSNLKSGEGLDQIIDFIERQGLFKT</sequence>
<proteinExistence type="inferred from homology"/>
<organism>
    <name type="scientific">Nitrosococcus oceani (strain ATCC 19707 / BCRC 17464 / JCM 30415 / NCIMB 11848 / C-107)</name>
    <dbReference type="NCBI Taxonomy" id="323261"/>
    <lineage>
        <taxon>Bacteria</taxon>
        <taxon>Pseudomonadati</taxon>
        <taxon>Pseudomonadota</taxon>
        <taxon>Gammaproteobacteria</taxon>
        <taxon>Chromatiales</taxon>
        <taxon>Chromatiaceae</taxon>
        <taxon>Nitrosococcus</taxon>
    </lineage>
</organism>
<protein>
    <recommendedName>
        <fullName evidence="1">Urease accessory protein UreG</fullName>
    </recommendedName>
</protein>
<dbReference type="EMBL" id="CP000127">
    <property type="protein sequence ID" value="ABA59323.1"/>
    <property type="molecule type" value="Genomic_DNA"/>
</dbReference>
<dbReference type="RefSeq" id="WP_002813278.1">
    <property type="nucleotide sequence ID" value="NC_007484.1"/>
</dbReference>
<dbReference type="SMR" id="Q3J773"/>
<dbReference type="FunCoup" id="Q3J773">
    <property type="interactions" value="23"/>
</dbReference>
<dbReference type="STRING" id="323261.Noc_2877"/>
<dbReference type="KEGG" id="noc:Noc_2877"/>
<dbReference type="eggNOG" id="COG0378">
    <property type="taxonomic scope" value="Bacteria"/>
</dbReference>
<dbReference type="HOGENOM" id="CLU_072144_1_0_6"/>
<dbReference type="InParanoid" id="Q3J773"/>
<dbReference type="Proteomes" id="UP000006838">
    <property type="component" value="Chromosome"/>
</dbReference>
<dbReference type="GO" id="GO:0005737">
    <property type="term" value="C:cytoplasm"/>
    <property type="evidence" value="ECO:0007669"/>
    <property type="project" value="UniProtKB-SubCell"/>
</dbReference>
<dbReference type="GO" id="GO:0005525">
    <property type="term" value="F:GTP binding"/>
    <property type="evidence" value="ECO:0007669"/>
    <property type="project" value="UniProtKB-KW"/>
</dbReference>
<dbReference type="GO" id="GO:0003924">
    <property type="term" value="F:GTPase activity"/>
    <property type="evidence" value="ECO:0007669"/>
    <property type="project" value="InterPro"/>
</dbReference>
<dbReference type="GO" id="GO:0016151">
    <property type="term" value="F:nickel cation binding"/>
    <property type="evidence" value="ECO:0007669"/>
    <property type="project" value="UniProtKB-UniRule"/>
</dbReference>
<dbReference type="GO" id="GO:0043419">
    <property type="term" value="P:urea catabolic process"/>
    <property type="evidence" value="ECO:0007669"/>
    <property type="project" value="InterPro"/>
</dbReference>
<dbReference type="CDD" id="cd05540">
    <property type="entry name" value="UreG"/>
    <property type="match status" value="1"/>
</dbReference>
<dbReference type="FunFam" id="3.40.50.300:FF:000208">
    <property type="entry name" value="Urease accessory protein UreG"/>
    <property type="match status" value="1"/>
</dbReference>
<dbReference type="Gene3D" id="3.40.50.300">
    <property type="entry name" value="P-loop containing nucleotide triphosphate hydrolases"/>
    <property type="match status" value="1"/>
</dbReference>
<dbReference type="HAMAP" id="MF_01389">
    <property type="entry name" value="UreG"/>
    <property type="match status" value="1"/>
</dbReference>
<dbReference type="InterPro" id="IPR003495">
    <property type="entry name" value="CobW/HypB/UreG_nucleotide-bd"/>
</dbReference>
<dbReference type="InterPro" id="IPR027417">
    <property type="entry name" value="P-loop_NTPase"/>
</dbReference>
<dbReference type="InterPro" id="IPR004400">
    <property type="entry name" value="UreG"/>
</dbReference>
<dbReference type="NCBIfam" id="TIGR00101">
    <property type="entry name" value="ureG"/>
    <property type="match status" value="1"/>
</dbReference>
<dbReference type="PANTHER" id="PTHR31715">
    <property type="entry name" value="UREASE ACCESSORY PROTEIN G"/>
    <property type="match status" value="1"/>
</dbReference>
<dbReference type="PANTHER" id="PTHR31715:SF0">
    <property type="entry name" value="UREASE ACCESSORY PROTEIN G"/>
    <property type="match status" value="1"/>
</dbReference>
<dbReference type="Pfam" id="PF02492">
    <property type="entry name" value="cobW"/>
    <property type="match status" value="1"/>
</dbReference>
<dbReference type="PIRSF" id="PIRSF005624">
    <property type="entry name" value="Ni-bind_GTPase"/>
    <property type="match status" value="1"/>
</dbReference>
<dbReference type="SUPFAM" id="SSF52540">
    <property type="entry name" value="P-loop containing nucleoside triphosphate hydrolases"/>
    <property type="match status" value="1"/>
</dbReference>
<keyword id="KW-0143">Chaperone</keyword>
<keyword id="KW-0963">Cytoplasm</keyword>
<keyword id="KW-0342">GTP-binding</keyword>
<keyword id="KW-0996">Nickel insertion</keyword>
<keyword id="KW-0547">Nucleotide-binding</keyword>
<keyword id="KW-1185">Reference proteome</keyword>
<gene>
    <name evidence="1" type="primary">ureG</name>
    <name type="ordered locus">Noc_2877</name>
</gene>
<feature type="chain" id="PRO_1000145197" description="Urease accessory protein UreG">
    <location>
        <begin position="1"/>
        <end position="203"/>
    </location>
</feature>
<feature type="binding site" evidence="1">
    <location>
        <begin position="12"/>
        <end position="19"/>
    </location>
    <ligand>
        <name>GTP</name>
        <dbReference type="ChEBI" id="CHEBI:37565"/>
    </ligand>
</feature>
<reference key="1">
    <citation type="journal article" date="2006" name="Appl. Environ. Microbiol.">
        <title>Complete genome sequence of the marine, chemolithoautotrophic, ammonia-oxidizing bacterium Nitrosococcus oceani ATCC 19707.</title>
        <authorList>
            <person name="Klotz M.G."/>
            <person name="Arp D.J."/>
            <person name="Chain P.S.G."/>
            <person name="El-Sheikh A.F."/>
            <person name="Hauser L.J."/>
            <person name="Hommes N.G."/>
            <person name="Larimer F.W."/>
            <person name="Malfatti S.A."/>
            <person name="Norton J.M."/>
            <person name="Poret-Peterson A.T."/>
            <person name="Vergez L.M."/>
            <person name="Ward B.B."/>
        </authorList>
    </citation>
    <scope>NUCLEOTIDE SEQUENCE [LARGE SCALE GENOMIC DNA]</scope>
    <source>
        <strain>ATCC 19707 / BCRC 17464 / JCM 30415 / NCIMB 11848 / C-107</strain>
    </source>
</reference>
<comment type="function">
    <text evidence="1">Facilitates the functional incorporation of the urease nickel metallocenter. This process requires GTP hydrolysis, probably effectuated by UreG.</text>
</comment>
<comment type="subunit">
    <text evidence="1">Homodimer. UreD, UreF and UreG form a complex that acts as a GTP-hydrolysis-dependent molecular chaperone, activating the urease apoprotein by helping to assemble the nickel containing metallocenter of UreC. The UreE protein probably delivers the nickel.</text>
</comment>
<comment type="subcellular location">
    <subcellularLocation>
        <location evidence="1">Cytoplasm</location>
    </subcellularLocation>
</comment>
<comment type="similarity">
    <text evidence="1">Belongs to the SIMIBI class G3E GTPase family. UreG subfamily.</text>
</comment>